<reference key="1">
    <citation type="journal article" date="1998" name="Science">
        <title>Genome sequence of the nematode C. elegans: a platform for investigating biology.</title>
        <authorList>
            <consortium name="The C. elegans sequencing consortium"/>
        </authorList>
    </citation>
    <scope>NUCLEOTIDE SEQUENCE [LARGE SCALE GENOMIC DNA]</scope>
    <source>
        <strain>Bristol N2</strain>
    </source>
</reference>
<accession>Q11083</accession>
<evidence type="ECO:0000255" key="1">
    <source>
        <dbReference type="PROSITE-ProRule" id="PRU00448"/>
    </source>
</evidence>
<evidence type="ECO:0000256" key="2">
    <source>
        <dbReference type="SAM" id="MobiDB-lite"/>
    </source>
</evidence>
<organism>
    <name type="scientific">Caenorhabditis elegans</name>
    <dbReference type="NCBI Taxonomy" id="6239"/>
    <lineage>
        <taxon>Eukaryota</taxon>
        <taxon>Metazoa</taxon>
        <taxon>Ecdysozoa</taxon>
        <taxon>Nematoda</taxon>
        <taxon>Chromadorea</taxon>
        <taxon>Rhabditida</taxon>
        <taxon>Rhabditina</taxon>
        <taxon>Rhabditomorpha</taxon>
        <taxon>Rhabditoidea</taxon>
        <taxon>Rhabditidae</taxon>
        <taxon>Peloderinae</taxon>
        <taxon>Caenorhabditis</taxon>
    </lineage>
</organism>
<gene>
    <name type="ORF">B0563.7</name>
</gene>
<feature type="chain" id="PRO_0000073838" description="Uncharacterized calcium-binding protein B0563.7">
    <location>
        <begin position="1"/>
        <end position="229"/>
    </location>
</feature>
<feature type="domain" description="EF-hand 1" evidence="1">
    <location>
        <begin position="48"/>
        <end position="83"/>
    </location>
</feature>
<feature type="domain" description="EF-hand 2" evidence="1">
    <location>
        <begin position="84"/>
        <end position="119"/>
    </location>
</feature>
<feature type="domain" description="EF-hand 3" evidence="1">
    <location>
        <begin position="123"/>
        <end position="158"/>
    </location>
</feature>
<feature type="domain" description="EF-hand 4" evidence="1">
    <location>
        <begin position="159"/>
        <end position="193"/>
    </location>
</feature>
<feature type="region of interest" description="Disordered" evidence="2">
    <location>
        <begin position="1"/>
        <end position="41"/>
    </location>
</feature>
<feature type="region of interest" description="Disordered" evidence="2">
    <location>
        <begin position="194"/>
        <end position="229"/>
    </location>
</feature>
<feature type="compositionally biased region" description="Polar residues" evidence="2">
    <location>
        <begin position="21"/>
        <end position="39"/>
    </location>
</feature>
<feature type="compositionally biased region" description="Basic and acidic residues" evidence="2">
    <location>
        <begin position="194"/>
        <end position="217"/>
    </location>
</feature>
<feature type="binding site" evidence="1">
    <location>
        <position position="61"/>
    </location>
    <ligand>
        <name>Ca(2+)</name>
        <dbReference type="ChEBI" id="CHEBI:29108"/>
        <label>1</label>
    </ligand>
</feature>
<feature type="binding site" evidence="1">
    <location>
        <position position="63"/>
    </location>
    <ligand>
        <name>Ca(2+)</name>
        <dbReference type="ChEBI" id="CHEBI:29108"/>
        <label>1</label>
    </ligand>
</feature>
<feature type="binding site" evidence="1">
    <location>
        <position position="65"/>
    </location>
    <ligand>
        <name>Ca(2+)</name>
        <dbReference type="ChEBI" id="CHEBI:29108"/>
        <label>1</label>
    </ligand>
</feature>
<feature type="binding site" evidence="1">
    <location>
        <position position="72"/>
    </location>
    <ligand>
        <name>Ca(2+)</name>
        <dbReference type="ChEBI" id="CHEBI:29108"/>
        <label>1</label>
    </ligand>
</feature>
<feature type="binding site" evidence="1">
    <location>
        <position position="97"/>
    </location>
    <ligand>
        <name>Ca(2+)</name>
        <dbReference type="ChEBI" id="CHEBI:29108"/>
        <label>2</label>
    </ligand>
</feature>
<feature type="binding site" evidence="1">
    <location>
        <position position="99"/>
    </location>
    <ligand>
        <name>Ca(2+)</name>
        <dbReference type="ChEBI" id="CHEBI:29108"/>
        <label>2</label>
    </ligand>
</feature>
<feature type="binding site" evidence="1">
    <location>
        <position position="101"/>
    </location>
    <ligand>
        <name>Ca(2+)</name>
        <dbReference type="ChEBI" id="CHEBI:29108"/>
        <label>2</label>
    </ligand>
</feature>
<feature type="binding site" evidence="1">
    <location>
        <position position="103"/>
    </location>
    <ligand>
        <name>Ca(2+)</name>
        <dbReference type="ChEBI" id="CHEBI:29108"/>
        <label>2</label>
    </ligand>
</feature>
<feature type="binding site" evidence="1">
    <location>
        <position position="108"/>
    </location>
    <ligand>
        <name>Ca(2+)</name>
        <dbReference type="ChEBI" id="CHEBI:29108"/>
        <label>2</label>
    </ligand>
</feature>
<feature type="binding site" evidence="1">
    <location>
        <position position="136"/>
    </location>
    <ligand>
        <name>Ca(2+)</name>
        <dbReference type="ChEBI" id="CHEBI:29108"/>
        <label>3</label>
    </ligand>
</feature>
<feature type="binding site" evidence="1">
    <location>
        <position position="138"/>
    </location>
    <ligand>
        <name>Ca(2+)</name>
        <dbReference type="ChEBI" id="CHEBI:29108"/>
        <label>3</label>
    </ligand>
</feature>
<feature type="binding site" evidence="1">
    <location>
        <position position="140"/>
    </location>
    <ligand>
        <name>Ca(2+)</name>
        <dbReference type="ChEBI" id="CHEBI:29108"/>
        <label>3</label>
    </ligand>
</feature>
<feature type="binding site" evidence="1">
    <location>
        <position position="147"/>
    </location>
    <ligand>
        <name>Ca(2+)</name>
        <dbReference type="ChEBI" id="CHEBI:29108"/>
        <label>3</label>
    </ligand>
</feature>
<name>YT67_CAEEL</name>
<proteinExistence type="predicted"/>
<protein>
    <recommendedName>
        <fullName>Uncharacterized calcium-binding protein B0563.7</fullName>
    </recommendedName>
</protein>
<dbReference type="EMBL" id="FO080238">
    <property type="protein sequence ID" value="CCD62255.1"/>
    <property type="molecule type" value="Genomic_DNA"/>
</dbReference>
<dbReference type="PIR" id="T15359">
    <property type="entry name" value="T15359"/>
</dbReference>
<dbReference type="RefSeq" id="NP_509544.1">
    <property type="nucleotide sequence ID" value="NM_077143.2"/>
</dbReference>
<dbReference type="SMR" id="Q11083"/>
<dbReference type="FunCoup" id="Q11083">
    <property type="interactions" value="110"/>
</dbReference>
<dbReference type="STRING" id="6239.B0563.7.1"/>
<dbReference type="PaxDb" id="6239-B0563.7"/>
<dbReference type="EnsemblMetazoa" id="B0563.7.1">
    <property type="protein sequence ID" value="B0563.7.1"/>
    <property type="gene ID" value="WBGene00015264"/>
</dbReference>
<dbReference type="GeneID" id="182041"/>
<dbReference type="KEGG" id="cel:CELE_B0563.7"/>
<dbReference type="UCSC" id="B0563.7">
    <property type="organism name" value="c. elegans"/>
</dbReference>
<dbReference type="AGR" id="WB:WBGene00015264"/>
<dbReference type="CTD" id="182041"/>
<dbReference type="WormBase" id="B0563.7">
    <property type="protein sequence ID" value="CE02445"/>
    <property type="gene ID" value="WBGene00015264"/>
</dbReference>
<dbReference type="eggNOG" id="KOG0027">
    <property type="taxonomic scope" value="Eukaryota"/>
</dbReference>
<dbReference type="GeneTree" id="ENSGT00970000196403"/>
<dbReference type="HOGENOM" id="CLU_061288_20_2_1"/>
<dbReference type="InParanoid" id="Q11083"/>
<dbReference type="OMA" id="CANDFNI"/>
<dbReference type="OrthoDB" id="424753at2759"/>
<dbReference type="PhylomeDB" id="Q11083"/>
<dbReference type="Reactome" id="R-CEL-5696394">
    <property type="pathway name" value="DNA Damage Recognition in GG-NER"/>
</dbReference>
<dbReference type="Reactome" id="R-CEL-5696395">
    <property type="pathway name" value="Formation of Incision Complex in GG-NER"/>
</dbReference>
<dbReference type="Reactome" id="R-CEL-9646399">
    <property type="pathway name" value="Aggrephagy"/>
</dbReference>
<dbReference type="PRO" id="PR:Q11083"/>
<dbReference type="Proteomes" id="UP000001940">
    <property type="component" value="Chromosome X"/>
</dbReference>
<dbReference type="Bgee" id="WBGene00015264">
    <property type="expression patterns" value="Expressed in larva and 3 other cell types or tissues"/>
</dbReference>
<dbReference type="GO" id="GO:0005813">
    <property type="term" value="C:centrosome"/>
    <property type="evidence" value="ECO:0000318"/>
    <property type="project" value="GO_Central"/>
</dbReference>
<dbReference type="GO" id="GO:0005737">
    <property type="term" value="C:cytoplasm"/>
    <property type="evidence" value="ECO:0000318"/>
    <property type="project" value="GO_Central"/>
</dbReference>
<dbReference type="GO" id="GO:0005509">
    <property type="term" value="F:calcium ion binding"/>
    <property type="evidence" value="ECO:0000318"/>
    <property type="project" value="GO_Central"/>
</dbReference>
<dbReference type="FunFam" id="1.10.238.10:FF:000336">
    <property type="entry name" value="HLH domain-containing protein"/>
    <property type="match status" value="1"/>
</dbReference>
<dbReference type="Gene3D" id="1.10.238.10">
    <property type="entry name" value="EF-hand"/>
    <property type="match status" value="2"/>
</dbReference>
<dbReference type="InterPro" id="IPR050145">
    <property type="entry name" value="Centrin_CML-like"/>
</dbReference>
<dbReference type="InterPro" id="IPR011992">
    <property type="entry name" value="EF-hand-dom_pair"/>
</dbReference>
<dbReference type="InterPro" id="IPR018247">
    <property type="entry name" value="EF_Hand_1_Ca_BS"/>
</dbReference>
<dbReference type="InterPro" id="IPR002048">
    <property type="entry name" value="EF_hand_dom"/>
</dbReference>
<dbReference type="PANTHER" id="PTHR23050">
    <property type="entry name" value="CALCIUM BINDING PROTEIN"/>
    <property type="match status" value="1"/>
</dbReference>
<dbReference type="Pfam" id="PF13499">
    <property type="entry name" value="EF-hand_7"/>
    <property type="match status" value="2"/>
</dbReference>
<dbReference type="SMART" id="SM00054">
    <property type="entry name" value="EFh"/>
    <property type="match status" value="4"/>
</dbReference>
<dbReference type="SUPFAM" id="SSF47473">
    <property type="entry name" value="EF-hand"/>
    <property type="match status" value="1"/>
</dbReference>
<dbReference type="PROSITE" id="PS00018">
    <property type="entry name" value="EF_HAND_1"/>
    <property type="match status" value="3"/>
</dbReference>
<dbReference type="PROSITE" id="PS50222">
    <property type="entry name" value="EF_HAND_2"/>
    <property type="match status" value="4"/>
</dbReference>
<sequence length="229" mass="26076">MRSAKVGVARQLETKKPQTGRKISTSSRGTIHSQQSQPEDIQMKYTRKELKEYRQLFNMFDTDGSGAIGNEELKQAMISIGLHANKAEIDNVIKEVDADGNGEIDFEEFCACMKKSQNIVKSTNEELIRECFEIFDQDRNGIITENEFKYIAKEFGDFDDELAEKVFRELDVSANGHLSADQFATIVEDYLLNDPKHDIDTGDSDVERYDDRHDDRASPMPNHLSTVPE</sequence>
<keyword id="KW-0106">Calcium</keyword>
<keyword id="KW-0479">Metal-binding</keyword>
<keyword id="KW-1185">Reference proteome</keyword>
<keyword id="KW-0677">Repeat</keyword>